<protein>
    <recommendedName>
        <fullName evidence="1">Large ribosomal subunit protein uL5</fullName>
    </recommendedName>
    <alternativeName>
        <fullName evidence="2">50S ribosomal protein L5</fullName>
    </alternativeName>
</protein>
<reference key="1">
    <citation type="journal article" date="2007" name="Proc. Natl. Acad. Sci. U.S.A.">
        <title>Genomic and metabolic adaptations of Methanobrevibacter smithii to the human gut.</title>
        <authorList>
            <person name="Samuel B.S."/>
            <person name="Hansen E.E."/>
            <person name="Manchester J.K."/>
            <person name="Coutinho P.M."/>
            <person name="Henrissat B."/>
            <person name="Fulton R."/>
            <person name="Latreille P."/>
            <person name="Kim K."/>
            <person name="Wilson R.K."/>
            <person name="Gordon J.I."/>
        </authorList>
    </citation>
    <scope>NUCLEOTIDE SEQUENCE [LARGE SCALE GENOMIC DNA]</scope>
    <source>
        <strain>ATCC 35061 / DSM 861 / OCM 144 / PS</strain>
    </source>
</reference>
<proteinExistence type="inferred from homology"/>
<sequence length="170" mass="19250">MNPMNEVQISKATVSIGVGEAGEKLSRAITLLEQMFDQTPVKTFSKVTNPEFGIRKRQPIACKLTLRGEKADKAIEMVLEGINKNIKPTQFDAQGNLSFGIKEHIDIPGMKYNPDIGIFGMNVSVTFEKPGYRIAKRRIQQKKVPAKHRISKEETMKYMEDNFNVNYVTE</sequence>
<gene>
    <name evidence="1" type="primary">rpl5</name>
    <name type="ordered locus">Msm_0748</name>
</gene>
<evidence type="ECO:0000255" key="1">
    <source>
        <dbReference type="HAMAP-Rule" id="MF_01333"/>
    </source>
</evidence>
<evidence type="ECO:0000305" key="2"/>
<accession>A5UL75</accession>
<feature type="chain" id="PRO_1000052773" description="Large ribosomal subunit protein uL5">
    <location>
        <begin position="1"/>
        <end position="170"/>
    </location>
</feature>
<keyword id="KW-0687">Ribonucleoprotein</keyword>
<keyword id="KW-0689">Ribosomal protein</keyword>
<keyword id="KW-0694">RNA-binding</keyword>
<keyword id="KW-0699">rRNA-binding</keyword>
<keyword id="KW-0820">tRNA-binding</keyword>
<name>RL5_METS3</name>
<dbReference type="EMBL" id="CP000678">
    <property type="protein sequence ID" value="ABQ86953.1"/>
    <property type="molecule type" value="Genomic_DNA"/>
</dbReference>
<dbReference type="RefSeq" id="WP_004033223.1">
    <property type="nucleotide sequence ID" value="NZ_CP117965.1"/>
</dbReference>
<dbReference type="SMR" id="A5UL75"/>
<dbReference type="STRING" id="420247.Msm_0748"/>
<dbReference type="EnsemblBacteria" id="ABQ86953">
    <property type="protein sequence ID" value="ABQ86953"/>
    <property type="gene ID" value="Msm_0748"/>
</dbReference>
<dbReference type="KEGG" id="msi:Msm_0748"/>
<dbReference type="PATRIC" id="fig|420247.28.peg.745"/>
<dbReference type="eggNOG" id="arCOG04092">
    <property type="taxonomic scope" value="Archaea"/>
</dbReference>
<dbReference type="HOGENOM" id="CLU_061015_3_0_2"/>
<dbReference type="Proteomes" id="UP000001992">
    <property type="component" value="Chromosome"/>
</dbReference>
<dbReference type="GO" id="GO:1990904">
    <property type="term" value="C:ribonucleoprotein complex"/>
    <property type="evidence" value="ECO:0007669"/>
    <property type="project" value="UniProtKB-KW"/>
</dbReference>
<dbReference type="GO" id="GO:0005840">
    <property type="term" value="C:ribosome"/>
    <property type="evidence" value="ECO:0007669"/>
    <property type="project" value="UniProtKB-KW"/>
</dbReference>
<dbReference type="GO" id="GO:0019843">
    <property type="term" value="F:rRNA binding"/>
    <property type="evidence" value="ECO:0007669"/>
    <property type="project" value="UniProtKB-UniRule"/>
</dbReference>
<dbReference type="GO" id="GO:0003735">
    <property type="term" value="F:structural constituent of ribosome"/>
    <property type="evidence" value="ECO:0007669"/>
    <property type="project" value="InterPro"/>
</dbReference>
<dbReference type="GO" id="GO:0000049">
    <property type="term" value="F:tRNA binding"/>
    <property type="evidence" value="ECO:0007669"/>
    <property type="project" value="UniProtKB-UniRule"/>
</dbReference>
<dbReference type="GO" id="GO:0006412">
    <property type="term" value="P:translation"/>
    <property type="evidence" value="ECO:0007669"/>
    <property type="project" value="UniProtKB-UniRule"/>
</dbReference>
<dbReference type="FunFam" id="3.30.1440.10:FF:000002">
    <property type="entry name" value="60S ribosomal protein L11"/>
    <property type="match status" value="1"/>
</dbReference>
<dbReference type="Gene3D" id="3.30.1440.10">
    <property type="match status" value="1"/>
</dbReference>
<dbReference type="HAMAP" id="MF_01333_A">
    <property type="entry name" value="Ribosomal_uL5_A"/>
    <property type="match status" value="1"/>
</dbReference>
<dbReference type="InterPro" id="IPR002132">
    <property type="entry name" value="Ribosomal_uL5"/>
</dbReference>
<dbReference type="InterPro" id="IPR022804">
    <property type="entry name" value="Ribosomal_uL5_arc"/>
</dbReference>
<dbReference type="InterPro" id="IPR031309">
    <property type="entry name" value="Ribosomal_uL5_C"/>
</dbReference>
<dbReference type="InterPro" id="IPR022803">
    <property type="entry name" value="Ribosomal_uL5_dom_sf"/>
</dbReference>
<dbReference type="InterPro" id="IPR031310">
    <property type="entry name" value="Ribosomal_uL5_N"/>
</dbReference>
<dbReference type="NCBIfam" id="NF003258">
    <property type="entry name" value="PRK04219.1"/>
    <property type="match status" value="1"/>
</dbReference>
<dbReference type="PANTHER" id="PTHR11994">
    <property type="entry name" value="60S RIBOSOMAL PROTEIN L11-RELATED"/>
    <property type="match status" value="1"/>
</dbReference>
<dbReference type="Pfam" id="PF00281">
    <property type="entry name" value="Ribosomal_L5"/>
    <property type="match status" value="1"/>
</dbReference>
<dbReference type="Pfam" id="PF00673">
    <property type="entry name" value="Ribosomal_L5_C"/>
    <property type="match status" value="1"/>
</dbReference>
<dbReference type="PIRSF" id="PIRSF002161">
    <property type="entry name" value="Ribosomal_L5"/>
    <property type="match status" value="1"/>
</dbReference>
<dbReference type="SUPFAM" id="SSF55282">
    <property type="entry name" value="RL5-like"/>
    <property type="match status" value="1"/>
</dbReference>
<comment type="function">
    <text evidence="1">This is one of the proteins that bind and probably mediate the attachment of the 5S RNA into the large ribosomal subunit, where it forms part of the central protuberance. In the 70S ribosome it contacts protein S13 of the 30S subunit (bridge B1b), connecting the 2 subunits; this bridge is implicated in subunit movement. May contact the P site tRNA; the 5S rRNA and some of its associated proteins might help stabilize positioning of ribosome-bound tRNAs.</text>
</comment>
<comment type="subunit">
    <text evidence="1">Part of the 50S ribosomal subunit; contacts the 5S rRNA and probably tRNA. Forms a bridge to the 30S subunit in the 70S ribosome.</text>
</comment>
<comment type="similarity">
    <text evidence="1">Belongs to the universal ribosomal protein uL5 family.</text>
</comment>
<organism>
    <name type="scientific">Methanobrevibacter smithii (strain ATCC 35061 / DSM 861 / OCM 144 / PS)</name>
    <dbReference type="NCBI Taxonomy" id="420247"/>
    <lineage>
        <taxon>Archaea</taxon>
        <taxon>Methanobacteriati</taxon>
        <taxon>Methanobacteriota</taxon>
        <taxon>Methanomada group</taxon>
        <taxon>Methanobacteria</taxon>
        <taxon>Methanobacteriales</taxon>
        <taxon>Methanobacteriaceae</taxon>
        <taxon>Methanobrevibacter</taxon>
    </lineage>
</organism>